<sequence length="293" mass="32055">MAITAQLVKQLRERTGAGMMDCKKALTETNGDIDAAVDYLREKGIAKAAKKADRIAAEGTTYVASSGNTAVLLELNSETDFVARNEGFQALVKEMADHILATKPADLDALMASEIETGKTVETKLNEAISTIGEKLTLRRFVLAEKTDADAFGEYLHMGGRIGVLAVVENSTDAEAAKDVAMHIAALNPKFVSREQVSAEELEHEKEILKQQALNEGKPENIVEKMVEGRLRKYLEEICAVDQPFVKNPDQTVAEFLKSKGGSLKSFVRYEVGEGIEKRQDNFADEVMGQMGK</sequence>
<name>EFTS_MACCJ</name>
<reference key="1">
    <citation type="journal article" date="2009" name="J. Bacteriol.">
        <title>Complete genome sequence of Macrococcus caseolyticus strain JCSCS5402, reflecting the ancestral genome of the human-pathogenic staphylococci.</title>
        <authorList>
            <person name="Baba T."/>
            <person name="Kuwahara-Arai K."/>
            <person name="Uchiyama I."/>
            <person name="Takeuchi F."/>
            <person name="Ito T."/>
            <person name="Hiramatsu K."/>
        </authorList>
    </citation>
    <scope>NUCLEOTIDE SEQUENCE [LARGE SCALE GENOMIC DNA]</scope>
    <source>
        <strain>JCSC5402</strain>
    </source>
</reference>
<evidence type="ECO:0000255" key="1">
    <source>
        <dbReference type="HAMAP-Rule" id="MF_00050"/>
    </source>
</evidence>
<keyword id="KW-0963">Cytoplasm</keyword>
<keyword id="KW-0251">Elongation factor</keyword>
<keyword id="KW-0648">Protein biosynthesis</keyword>
<keyword id="KW-1185">Reference proteome</keyword>
<dbReference type="EMBL" id="AP009484">
    <property type="protein sequence ID" value="BAH17548.1"/>
    <property type="molecule type" value="Genomic_DNA"/>
</dbReference>
<dbReference type="RefSeq" id="WP_012656748.1">
    <property type="nucleotide sequence ID" value="NC_011999.1"/>
</dbReference>
<dbReference type="SMR" id="B9EBD7"/>
<dbReference type="STRING" id="458233.MCCL_0841"/>
<dbReference type="GeneID" id="61129250"/>
<dbReference type="KEGG" id="mcl:MCCL_0841"/>
<dbReference type="eggNOG" id="COG0264">
    <property type="taxonomic scope" value="Bacteria"/>
</dbReference>
<dbReference type="HOGENOM" id="CLU_047155_0_2_9"/>
<dbReference type="OrthoDB" id="9808348at2"/>
<dbReference type="Proteomes" id="UP000001383">
    <property type="component" value="Chromosome"/>
</dbReference>
<dbReference type="GO" id="GO:0005737">
    <property type="term" value="C:cytoplasm"/>
    <property type="evidence" value="ECO:0007669"/>
    <property type="project" value="UniProtKB-SubCell"/>
</dbReference>
<dbReference type="GO" id="GO:0003746">
    <property type="term" value="F:translation elongation factor activity"/>
    <property type="evidence" value="ECO:0007669"/>
    <property type="project" value="UniProtKB-UniRule"/>
</dbReference>
<dbReference type="CDD" id="cd14275">
    <property type="entry name" value="UBA_EF-Ts"/>
    <property type="match status" value="1"/>
</dbReference>
<dbReference type="FunFam" id="1.10.286.20:FF:000003">
    <property type="entry name" value="Elongation factor Ts"/>
    <property type="match status" value="1"/>
</dbReference>
<dbReference type="FunFam" id="1.10.8.10:FF:000001">
    <property type="entry name" value="Elongation factor Ts"/>
    <property type="match status" value="1"/>
</dbReference>
<dbReference type="Gene3D" id="1.10.286.20">
    <property type="match status" value="1"/>
</dbReference>
<dbReference type="Gene3D" id="1.10.8.10">
    <property type="entry name" value="DNA helicase RuvA subunit, C-terminal domain"/>
    <property type="match status" value="1"/>
</dbReference>
<dbReference type="Gene3D" id="3.30.479.20">
    <property type="entry name" value="Elongation factor Ts, dimerisation domain"/>
    <property type="match status" value="2"/>
</dbReference>
<dbReference type="HAMAP" id="MF_00050">
    <property type="entry name" value="EF_Ts"/>
    <property type="match status" value="1"/>
</dbReference>
<dbReference type="InterPro" id="IPR036402">
    <property type="entry name" value="EF-Ts_dimer_sf"/>
</dbReference>
<dbReference type="InterPro" id="IPR001816">
    <property type="entry name" value="Transl_elong_EFTs/EF1B"/>
</dbReference>
<dbReference type="InterPro" id="IPR014039">
    <property type="entry name" value="Transl_elong_EFTs/EF1B_dimer"/>
</dbReference>
<dbReference type="InterPro" id="IPR018101">
    <property type="entry name" value="Transl_elong_Ts_CS"/>
</dbReference>
<dbReference type="InterPro" id="IPR009060">
    <property type="entry name" value="UBA-like_sf"/>
</dbReference>
<dbReference type="NCBIfam" id="TIGR00116">
    <property type="entry name" value="tsf"/>
    <property type="match status" value="1"/>
</dbReference>
<dbReference type="PANTHER" id="PTHR11741">
    <property type="entry name" value="ELONGATION FACTOR TS"/>
    <property type="match status" value="1"/>
</dbReference>
<dbReference type="PANTHER" id="PTHR11741:SF0">
    <property type="entry name" value="ELONGATION FACTOR TS, MITOCHONDRIAL"/>
    <property type="match status" value="1"/>
</dbReference>
<dbReference type="Pfam" id="PF00889">
    <property type="entry name" value="EF_TS"/>
    <property type="match status" value="1"/>
</dbReference>
<dbReference type="SUPFAM" id="SSF54713">
    <property type="entry name" value="Elongation factor Ts (EF-Ts), dimerisation domain"/>
    <property type="match status" value="2"/>
</dbReference>
<dbReference type="SUPFAM" id="SSF46934">
    <property type="entry name" value="UBA-like"/>
    <property type="match status" value="1"/>
</dbReference>
<dbReference type="PROSITE" id="PS01126">
    <property type="entry name" value="EF_TS_1"/>
    <property type="match status" value="1"/>
</dbReference>
<dbReference type="PROSITE" id="PS01127">
    <property type="entry name" value="EF_TS_2"/>
    <property type="match status" value="1"/>
</dbReference>
<protein>
    <recommendedName>
        <fullName evidence="1">Elongation factor Ts</fullName>
        <shortName evidence="1">EF-Ts</shortName>
    </recommendedName>
</protein>
<proteinExistence type="inferred from homology"/>
<feature type="chain" id="PRO_1000117586" description="Elongation factor Ts">
    <location>
        <begin position="1"/>
        <end position="293"/>
    </location>
</feature>
<feature type="region of interest" description="Involved in Mg(2+) ion dislocation from EF-Tu" evidence="1">
    <location>
        <begin position="79"/>
        <end position="82"/>
    </location>
</feature>
<comment type="function">
    <text evidence="1">Associates with the EF-Tu.GDP complex and induces the exchange of GDP to GTP. It remains bound to the aminoacyl-tRNA.EF-Tu.GTP complex up to the GTP hydrolysis stage on the ribosome.</text>
</comment>
<comment type="subcellular location">
    <subcellularLocation>
        <location evidence="1">Cytoplasm</location>
    </subcellularLocation>
</comment>
<comment type="similarity">
    <text evidence="1">Belongs to the EF-Ts family.</text>
</comment>
<organism>
    <name type="scientific">Macrococcus caseolyticus (strain JCSC5402)</name>
    <name type="common">Macrococcoides caseolyticum</name>
    <dbReference type="NCBI Taxonomy" id="458233"/>
    <lineage>
        <taxon>Bacteria</taxon>
        <taxon>Bacillati</taxon>
        <taxon>Bacillota</taxon>
        <taxon>Bacilli</taxon>
        <taxon>Bacillales</taxon>
        <taxon>Staphylococcaceae</taxon>
        <taxon>Macrococcoides</taxon>
    </lineage>
</organism>
<gene>
    <name evidence="1" type="primary">tsf</name>
    <name type="ordered locus">MCCL_0841</name>
</gene>
<accession>B9EBD7</accession>